<keyword id="KW-0687">Ribonucleoprotein</keyword>
<keyword id="KW-0689">Ribosomal protein</keyword>
<keyword id="KW-0694">RNA-binding</keyword>
<keyword id="KW-0699">rRNA-binding</keyword>
<name>RL21_CLOB8</name>
<sequence>MYAVLATGGKQYRVQEGDVIYVEKLNADVDSTVELNEVLAVGTEEGIKVGAPVVEGAKVVAKVAAQGKAKKVVVFKYKSKKDYRRKNGHRQPYTKLVIEKIEA</sequence>
<protein>
    <recommendedName>
        <fullName evidence="1">Large ribosomal subunit protein bL21</fullName>
    </recommendedName>
    <alternativeName>
        <fullName evidence="2">50S ribosomal protein L21</fullName>
    </alternativeName>
</protein>
<gene>
    <name evidence="1" type="primary">rplU</name>
    <name type="ordered locus">Cbei_0508</name>
</gene>
<organism>
    <name type="scientific">Clostridium beijerinckii (strain ATCC 51743 / NCIMB 8052)</name>
    <name type="common">Clostridium acetobutylicum</name>
    <dbReference type="NCBI Taxonomy" id="290402"/>
    <lineage>
        <taxon>Bacteria</taxon>
        <taxon>Bacillati</taxon>
        <taxon>Bacillota</taxon>
        <taxon>Clostridia</taxon>
        <taxon>Eubacteriales</taxon>
        <taxon>Clostridiaceae</taxon>
        <taxon>Clostridium</taxon>
    </lineage>
</organism>
<accession>A6LQR6</accession>
<reference key="1">
    <citation type="submission" date="2007-06" db="EMBL/GenBank/DDBJ databases">
        <title>Complete sequence of Clostridium beijerinckii NCIMB 8052.</title>
        <authorList>
            <consortium name="US DOE Joint Genome Institute"/>
            <person name="Copeland A."/>
            <person name="Lucas S."/>
            <person name="Lapidus A."/>
            <person name="Barry K."/>
            <person name="Detter J.C."/>
            <person name="Glavina del Rio T."/>
            <person name="Hammon N."/>
            <person name="Israni S."/>
            <person name="Dalin E."/>
            <person name="Tice H."/>
            <person name="Pitluck S."/>
            <person name="Sims D."/>
            <person name="Brettin T."/>
            <person name="Bruce D."/>
            <person name="Tapia R."/>
            <person name="Brainard J."/>
            <person name="Schmutz J."/>
            <person name="Larimer F."/>
            <person name="Land M."/>
            <person name="Hauser L."/>
            <person name="Kyrpides N."/>
            <person name="Mikhailova N."/>
            <person name="Bennet G."/>
            <person name="Cann I."/>
            <person name="Chen J.-S."/>
            <person name="Contreras A.L."/>
            <person name="Jones D."/>
            <person name="Kashket E."/>
            <person name="Mitchell W."/>
            <person name="Stoddard S."/>
            <person name="Schwarz W."/>
            <person name="Qureshi N."/>
            <person name="Young M."/>
            <person name="Shi Z."/>
            <person name="Ezeji T."/>
            <person name="White B."/>
            <person name="Blaschek H."/>
            <person name="Richardson P."/>
        </authorList>
    </citation>
    <scope>NUCLEOTIDE SEQUENCE [LARGE SCALE GENOMIC DNA]</scope>
    <source>
        <strain>ATCC 51743 / NCIMB 8052</strain>
    </source>
</reference>
<evidence type="ECO:0000255" key="1">
    <source>
        <dbReference type="HAMAP-Rule" id="MF_01363"/>
    </source>
</evidence>
<evidence type="ECO:0000305" key="2"/>
<proteinExistence type="inferred from homology"/>
<feature type="chain" id="PRO_1000086974" description="Large ribosomal subunit protein bL21">
    <location>
        <begin position="1"/>
        <end position="103"/>
    </location>
</feature>
<dbReference type="EMBL" id="CP000721">
    <property type="protein sequence ID" value="ABR32696.1"/>
    <property type="molecule type" value="Genomic_DNA"/>
</dbReference>
<dbReference type="RefSeq" id="WP_011967857.1">
    <property type="nucleotide sequence ID" value="NC_009617.1"/>
</dbReference>
<dbReference type="SMR" id="A6LQR6"/>
<dbReference type="GeneID" id="66343423"/>
<dbReference type="KEGG" id="cbe:Cbei_0508"/>
<dbReference type="eggNOG" id="COG0261">
    <property type="taxonomic scope" value="Bacteria"/>
</dbReference>
<dbReference type="HOGENOM" id="CLU_061463_3_2_9"/>
<dbReference type="Proteomes" id="UP000000565">
    <property type="component" value="Chromosome"/>
</dbReference>
<dbReference type="GO" id="GO:0005737">
    <property type="term" value="C:cytoplasm"/>
    <property type="evidence" value="ECO:0007669"/>
    <property type="project" value="UniProtKB-ARBA"/>
</dbReference>
<dbReference type="GO" id="GO:1990904">
    <property type="term" value="C:ribonucleoprotein complex"/>
    <property type="evidence" value="ECO:0007669"/>
    <property type="project" value="UniProtKB-KW"/>
</dbReference>
<dbReference type="GO" id="GO:0005840">
    <property type="term" value="C:ribosome"/>
    <property type="evidence" value="ECO:0007669"/>
    <property type="project" value="UniProtKB-KW"/>
</dbReference>
<dbReference type="GO" id="GO:0019843">
    <property type="term" value="F:rRNA binding"/>
    <property type="evidence" value="ECO:0007669"/>
    <property type="project" value="UniProtKB-UniRule"/>
</dbReference>
<dbReference type="GO" id="GO:0003735">
    <property type="term" value="F:structural constituent of ribosome"/>
    <property type="evidence" value="ECO:0007669"/>
    <property type="project" value="InterPro"/>
</dbReference>
<dbReference type="GO" id="GO:0006412">
    <property type="term" value="P:translation"/>
    <property type="evidence" value="ECO:0007669"/>
    <property type="project" value="UniProtKB-UniRule"/>
</dbReference>
<dbReference type="HAMAP" id="MF_01363">
    <property type="entry name" value="Ribosomal_bL21"/>
    <property type="match status" value="1"/>
</dbReference>
<dbReference type="InterPro" id="IPR028909">
    <property type="entry name" value="bL21-like"/>
</dbReference>
<dbReference type="InterPro" id="IPR036164">
    <property type="entry name" value="bL21-like_sf"/>
</dbReference>
<dbReference type="InterPro" id="IPR001787">
    <property type="entry name" value="Ribosomal_bL21"/>
</dbReference>
<dbReference type="InterPro" id="IPR018258">
    <property type="entry name" value="Ribosomal_bL21_CS"/>
</dbReference>
<dbReference type="NCBIfam" id="TIGR00061">
    <property type="entry name" value="L21"/>
    <property type="match status" value="1"/>
</dbReference>
<dbReference type="PANTHER" id="PTHR21349">
    <property type="entry name" value="50S RIBOSOMAL PROTEIN L21"/>
    <property type="match status" value="1"/>
</dbReference>
<dbReference type="PANTHER" id="PTHR21349:SF0">
    <property type="entry name" value="LARGE RIBOSOMAL SUBUNIT PROTEIN BL21M"/>
    <property type="match status" value="1"/>
</dbReference>
<dbReference type="Pfam" id="PF00829">
    <property type="entry name" value="Ribosomal_L21p"/>
    <property type="match status" value="1"/>
</dbReference>
<dbReference type="SUPFAM" id="SSF141091">
    <property type="entry name" value="L21p-like"/>
    <property type="match status" value="1"/>
</dbReference>
<dbReference type="PROSITE" id="PS01169">
    <property type="entry name" value="RIBOSOMAL_L21"/>
    <property type="match status" value="1"/>
</dbReference>
<comment type="function">
    <text evidence="1">This protein binds to 23S rRNA in the presence of protein L20.</text>
</comment>
<comment type="subunit">
    <text evidence="1">Part of the 50S ribosomal subunit. Contacts protein L20.</text>
</comment>
<comment type="similarity">
    <text evidence="1">Belongs to the bacterial ribosomal protein bL21 family.</text>
</comment>